<dbReference type="EC" id="2.4.2.7" evidence="1"/>
<dbReference type="EMBL" id="CP000800">
    <property type="protein sequence ID" value="ABV17111.1"/>
    <property type="molecule type" value="Genomic_DNA"/>
</dbReference>
<dbReference type="RefSeq" id="WP_000127356.1">
    <property type="nucleotide sequence ID" value="NC_009801.1"/>
</dbReference>
<dbReference type="SMR" id="A7ZIM8"/>
<dbReference type="GeneID" id="93776981"/>
<dbReference type="KEGG" id="ecw:EcE24377A_0506"/>
<dbReference type="HOGENOM" id="CLU_063339_3_0_6"/>
<dbReference type="UniPathway" id="UPA00588">
    <property type="reaction ID" value="UER00646"/>
</dbReference>
<dbReference type="Proteomes" id="UP000001122">
    <property type="component" value="Chromosome"/>
</dbReference>
<dbReference type="GO" id="GO:0005737">
    <property type="term" value="C:cytoplasm"/>
    <property type="evidence" value="ECO:0007669"/>
    <property type="project" value="UniProtKB-SubCell"/>
</dbReference>
<dbReference type="GO" id="GO:0002055">
    <property type="term" value="F:adenine binding"/>
    <property type="evidence" value="ECO:0007669"/>
    <property type="project" value="TreeGrafter"/>
</dbReference>
<dbReference type="GO" id="GO:0003999">
    <property type="term" value="F:adenine phosphoribosyltransferase activity"/>
    <property type="evidence" value="ECO:0007669"/>
    <property type="project" value="UniProtKB-UniRule"/>
</dbReference>
<dbReference type="GO" id="GO:0016208">
    <property type="term" value="F:AMP binding"/>
    <property type="evidence" value="ECO:0007669"/>
    <property type="project" value="TreeGrafter"/>
</dbReference>
<dbReference type="GO" id="GO:0006168">
    <property type="term" value="P:adenine salvage"/>
    <property type="evidence" value="ECO:0007669"/>
    <property type="project" value="InterPro"/>
</dbReference>
<dbReference type="GO" id="GO:0044209">
    <property type="term" value="P:AMP salvage"/>
    <property type="evidence" value="ECO:0007669"/>
    <property type="project" value="UniProtKB-UniRule"/>
</dbReference>
<dbReference type="GO" id="GO:0006166">
    <property type="term" value="P:purine ribonucleoside salvage"/>
    <property type="evidence" value="ECO:0007669"/>
    <property type="project" value="UniProtKB-KW"/>
</dbReference>
<dbReference type="CDD" id="cd06223">
    <property type="entry name" value="PRTases_typeI"/>
    <property type="match status" value="1"/>
</dbReference>
<dbReference type="FunFam" id="3.40.50.2020:FF:000004">
    <property type="entry name" value="Adenine phosphoribosyltransferase"/>
    <property type="match status" value="1"/>
</dbReference>
<dbReference type="Gene3D" id="3.40.50.2020">
    <property type="match status" value="1"/>
</dbReference>
<dbReference type="HAMAP" id="MF_00004">
    <property type="entry name" value="Aden_phosphoribosyltr"/>
    <property type="match status" value="1"/>
</dbReference>
<dbReference type="InterPro" id="IPR005764">
    <property type="entry name" value="Ade_phspho_trans"/>
</dbReference>
<dbReference type="InterPro" id="IPR000836">
    <property type="entry name" value="PRibTrfase_dom"/>
</dbReference>
<dbReference type="InterPro" id="IPR029057">
    <property type="entry name" value="PRTase-like"/>
</dbReference>
<dbReference type="InterPro" id="IPR050054">
    <property type="entry name" value="UPRTase/APRTase"/>
</dbReference>
<dbReference type="NCBIfam" id="TIGR01090">
    <property type="entry name" value="apt"/>
    <property type="match status" value="1"/>
</dbReference>
<dbReference type="NCBIfam" id="NF002632">
    <property type="entry name" value="PRK02304.1-1"/>
    <property type="match status" value="1"/>
</dbReference>
<dbReference type="NCBIfam" id="NF002633">
    <property type="entry name" value="PRK02304.1-2"/>
    <property type="match status" value="1"/>
</dbReference>
<dbReference type="NCBIfam" id="NF002634">
    <property type="entry name" value="PRK02304.1-3"/>
    <property type="match status" value="1"/>
</dbReference>
<dbReference type="NCBIfam" id="NF002636">
    <property type="entry name" value="PRK02304.1-5"/>
    <property type="match status" value="1"/>
</dbReference>
<dbReference type="PANTHER" id="PTHR32315">
    <property type="entry name" value="ADENINE PHOSPHORIBOSYLTRANSFERASE"/>
    <property type="match status" value="1"/>
</dbReference>
<dbReference type="PANTHER" id="PTHR32315:SF3">
    <property type="entry name" value="ADENINE PHOSPHORIBOSYLTRANSFERASE"/>
    <property type="match status" value="1"/>
</dbReference>
<dbReference type="Pfam" id="PF00156">
    <property type="entry name" value="Pribosyltran"/>
    <property type="match status" value="1"/>
</dbReference>
<dbReference type="SUPFAM" id="SSF53271">
    <property type="entry name" value="PRTase-like"/>
    <property type="match status" value="1"/>
</dbReference>
<dbReference type="PROSITE" id="PS00103">
    <property type="entry name" value="PUR_PYR_PR_TRANSFER"/>
    <property type="match status" value="1"/>
</dbReference>
<comment type="function">
    <text evidence="1">Catalyzes a salvage reaction resulting in the formation of AMP, that is energically less costly than de novo synthesis.</text>
</comment>
<comment type="catalytic activity">
    <reaction evidence="1">
        <text>AMP + diphosphate = 5-phospho-alpha-D-ribose 1-diphosphate + adenine</text>
        <dbReference type="Rhea" id="RHEA:16609"/>
        <dbReference type="ChEBI" id="CHEBI:16708"/>
        <dbReference type="ChEBI" id="CHEBI:33019"/>
        <dbReference type="ChEBI" id="CHEBI:58017"/>
        <dbReference type="ChEBI" id="CHEBI:456215"/>
        <dbReference type="EC" id="2.4.2.7"/>
    </reaction>
</comment>
<comment type="pathway">
    <text evidence="1">Purine metabolism; AMP biosynthesis via salvage pathway; AMP from adenine: step 1/1.</text>
</comment>
<comment type="subunit">
    <text evidence="1">Homodimer.</text>
</comment>
<comment type="subcellular location">
    <subcellularLocation>
        <location evidence="1">Cytoplasm</location>
    </subcellularLocation>
</comment>
<comment type="similarity">
    <text evidence="1">Belongs to the purine/pyrimidine phosphoribosyltransferase family.</text>
</comment>
<protein>
    <recommendedName>
        <fullName evidence="1">Adenine phosphoribosyltransferase</fullName>
        <shortName evidence="1">APRT</shortName>
        <ecNumber evidence="1">2.4.2.7</ecNumber>
    </recommendedName>
</protein>
<keyword id="KW-0963">Cytoplasm</keyword>
<keyword id="KW-0328">Glycosyltransferase</keyword>
<keyword id="KW-0660">Purine salvage</keyword>
<keyword id="KW-1185">Reference proteome</keyword>
<keyword id="KW-0808">Transferase</keyword>
<name>APT_ECO24</name>
<organism>
    <name type="scientific">Escherichia coli O139:H28 (strain E24377A / ETEC)</name>
    <dbReference type="NCBI Taxonomy" id="331111"/>
    <lineage>
        <taxon>Bacteria</taxon>
        <taxon>Pseudomonadati</taxon>
        <taxon>Pseudomonadota</taxon>
        <taxon>Gammaproteobacteria</taxon>
        <taxon>Enterobacterales</taxon>
        <taxon>Enterobacteriaceae</taxon>
        <taxon>Escherichia</taxon>
    </lineage>
</organism>
<proteinExistence type="inferred from homology"/>
<feature type="chain" id="PRO_1000057030" description="Adenine phosphoribosyltransferase">
    <location>
        <begin position="1"/>
        <end position="183"/>
    </location>
</feature>
<sequence length="183" mass="19859">MTATAQQLEYLKNSIKSIQDYPKPGILFRDVTSLLEDPKAYALSIDLLVERYKNAGITKVVGTEARGFLFGAPVALGLGVGFVPVRKPGKLPRETISETYDLEYGTDQLEIHVDAIKPGDKVLVVDDLLATGGTIEATVKLIRRLGGEVADAAFIINLFDLGGEQRLEKQGITSYSLVPFPGH</sequence>
<gene>
    <name evidence="1" type="primary">apt</name>
    <name type="ordered locus">EcE24377A_0506</name>
</gene>
<reference key="1">
    <citation type="journal article" date="2008" name="J. Bacteriol.">
        <title>The pangenome structure of Escherichia coli: comparative genomic analysis of E. coli commensal and pathogenic isolates.</title>
        <authorList>
            <person name="Rasko D.A."/>
            <person name="Rosovitz M.J."/>
            <person name="Myers G.S.A."/>
            <person name="Mongodin E.F."/>
            <person name="Fricke W.F."/>
            <person name="Gajer P."/>
            <person name="Crabtree J."/>
            <person name="Sebaihia M."/>
            <person name="Thomson N.R."/>
            <person name="Chaudhuri R."/>
            <person name="Henderson I.R."/>
            <person name="Sperandio V."/>
            <person name="Ravel J."/>
        </authorList>
    </citation>
    <scope>NUCLEOTIDE SEQUENCE [LARGE SCALE GENOMIC DNA]</scope>
    <source>
        <strain>E24377A / ETEC</strain>
    </source>
</reference>
<evidence type="ECO:0000255" key="1">
    <source>
        <dbReference type="HAMAP-Rule" id="MF_00004"/>
    </source>
</evidence>
<accession>A7ZIM8</accession>